<dbReference type="EC" id="6.1.1.21" evidence="1"/>
<dbReference type="EMBL" id="CU928164">
    <property type="protein sequence ID" value="CAR18838.1"/>
    <property type="molecule type" value="Genomic_DNA"/>
</dbReference>
<dbReference type="RefSeq" id="WP_001107167.1">
    <property type="nucleotide sequence ID" value="NC_011750.1"/>
</dbReference>
<dbReference type="RefSeq" id="YP_002408653.1">
    <property type="nucleotide sequence ID" value="NC_011750.1"/>
</dbReference>
<dbReference type="SMR" id="B7NRG4"/>
<dbReference type="STRING" id="585057.ECIAI39_2715"/>
<dbReference type="GeneID" id="75206207"/>
<dbReference type="KEGG" id="ect:ECIAI39_2715"/>
<dbReference type="PATRIC" id="fig|585057.6.peg.2823"/>
<dbReference type="HOGENOM" id="CLU_025113_1_1_6"/>
<dbReference type="Proteomes" id="UP000000749">
    <property type="component" value="Chromosome"/>
</dbReference>
<dbReference type="GO" id="GO:0005737">
    <property type="term" value="C:cytoplasm"/>
    <property type="evidence" value="ECO:0007669"/>
    <property type="project" value="UniProtKB-SubCell"/>
</dbReference>
<dbReference type="GO" id="GO:0005524">
    <property type="term" value="F:ATP binding"/>
    <property type="evidence" value="ECO:0007669"/>
    <property type="project" value="UniProtKB-UniRule"/>
</dbReference>
<dbReference type="GO" id="GO:0004821">
    <property type="term" value="F:histidine-tRNA ligase activity"/>
    <property type="evidence" value="ECO:0007669"/>
    <property type="project" value="UniProtKB-UniRule"/>
</dbReference>
<dbReference type="GO" id="GO:0006427">
    <property type="term" value="P:histidyl-tRNA aminoacylation"/>
    <property type="evidence" value="ECO:0007669"/>
    <property type="project" value="UniProtKB-UniRule"/>
</dbReference>
<dbReference type="CDD" id="cd00773">
    <property type="entry name" value="HisRS-like_core"/>
    <property type="match status" value="1"/>
</dbReference>
<dbReference type="CDD" id="cd00859">
    <property type="entry name" value="HisRS_anticodon"/>
    <property type="match status" value="1"/>
</dbReference>
<dbReference type="FunFam" id="3.30.930.10:FF:000005">
    <property type="entry name" value="Histidine--tRNA ligase"/>
    <property type="match status" value="1"/>
</dbReference>
<dbReference type="FunFam" id="3.40.50.800:FF:000007">
    <property type="entry name" value="Histidine--tRNA ligase"/>
    <property type="match status" value="1"/>
</dbReference>
<dbReference type="Gene3D" id="3.40.50.800">
    <property type="entry name" value="Anticodon-binding domain"/>
    <property type="match status" value="1"/>
</dbReference>
<dbReference type="Gene3D" id="3.30.930.10">
    <property type="entry name" value="Bira Bifunctional Protein, Domain 2"/>
    <property type="match status" value="1"/>
</dbReference>
<dbReference type="HAMAP" id="MF_00127">
    <property type="entry name" value="His_tRNA_synth"/>
    <property type="match status" value="1"/>
</dbReference>
<dbReference type="InterPro" id="IPR006195">
    <property type="entry name" value="aa-tRNA-synth_II"/>
</dbReference>
<dbReference type="InterPro" id="IPR045864">
    <property type="entry name" value="aa-tRNA-synth_II/BPL/LPL"/>
</dbReference>
<dbReference type="InterPro" id="IPR004154">
    <property type="entry name" value="Anticodon-bd"/>
</dbReference>
<dbReference type="InterPro" id="IPR036621">
    <property type="entry name" value="Anticodon-bd_dom_sf"/>
</dbReference>
<dbReference type="InterPro" id="IPR015807">
    <property type="entry name" value="His-tRNA-ligase"/>
</dbReference>
<dbReference type="InterPro" id="IPR041715">
    <property type="entry name" value="HisRS-like_core"/>
</dbReference>
<dbReference type="InterPro" id="IPR004516">
    <property type="entry name" value="HisRS/HisZ"/>
</dbReference>
<dbReference type="InterPro" id="IPR033656">
    <property type="entry name" value="HisRS_anticodon"/>
</dbReference>
<dbReference type="NCBIfam" id="TIGR00442">
    <property type="entry name" value="hisS"/>
    <property type="match status" value="1"/>
</dbReference>
<dbReference type="PANTHER" id="PTHR43707:SF1">
    <property type="entry name" value="HISTIDINE--TRNA LIGASE, MITOCHONDRIAL-RELATED"/>
    <property type="match status" value="1"/>
</dbReference>
<dbReference type="PANTHER" id="PTHR43707">
    <property type="entry name" value="HISTIDYL-TRNA SYNTHETASE"/>
    <property type="match status" value="1"/>
</dbReference>
<dbReference type="Pfam" id="PF03129">
    <property type="entry name" value="HGTP_anticodon"/>
    <property type="match status" value="1"/>
</dbReference>
<dbReference type="Pfam" id="PF13393">
    <property type="entry name" value="tRNA-synt_His"/>
    <property type="match status" value="1"/>
</dbReference>
<dbReference type="PIRSF" id="PIRSF001549">
    <property type="entry name" value="His-tRNA_synth"/>
    <property type="match status" value="1"/>
</dbReference>
<dbReference type="SUPFAM" id="SSF52954">
    <property type="entry name" value="Class II aaRS ABD-related"/>
    <property type="match status" value="1"/>
</dbReference>
<dbReference type="SUPFAM" id="SSF55681">
    <property type="entry name" value="Class II aaRS and biotin synthetases"/>
    <property type="match status" value="1"/>
</dbReference>
<dbReference type="PROSITE" id="PS50862">
    <property type="entry name" value="AA_TRNA_LIGASE_II"/>
    <property type="match status" value="1"/>
</dbReference>
<proteinExistence type="inferred from homology"/>
<name>SYH_ECO7I</name>
<comment type="catalytic activity">
    <reaction evidence="1">
        <text>tRNA(His) + L-histidine + ATP = L-histidyl-tRNA(His) + AMP + diphosphate + H(+)</text>
        <dbReference type="Rhea" id="RHEA:17313"/>
        <dbReference type="Rhea" id="RHEA-COMP:9665"/>
        <dbReference type="Rhea" id="RHEA-COMP:9689"/>
        <dbReference type="ChEBI" id="CHEBI:15378"/>
        <dbReference type="ChEBI" id="CHEBI:30616"/>
        <dbReference type="ChEBI" id="CHEBI:33019"/>
        <dbReference type="ChEBI" id="CHEBI:57595"/>
        <dbReference type="ChEBI" id="CHEBI:78442"/>
        <dbReference type="ChEBI" id="CHEBI:78527"/>
        <dbReference type="ChEBI" id="CHEBI:456215"/>
        <dbReference type="EC" id="6.1.1.21"/>
    </reaction>
</comment>
<comment type="subunit">
    <text evidence="1">Homodimer.</text>
</comment>
<comment type="subcellular location">
    <subcellularLocation>
        <location evidence="1">Cytoplasm</location>
    </subcellularLocation>
</comment>
<comment type="similarity">
    <text evidence="1">Belongs to the class-II aminoacyl-tRNA synthetase family.</text>
</comment>
<evidence type="ECO:0000255" key="1">
    <source>
        <dbReference type="HAMAP-Rule" id="MF_00127"/>
    </source>
</evidence>
<organism>
    <name type="scientific">Escherichia coli O7:K1 (strain IAI39 / ExPEC)</name>
    <dbReference type="NCBI Taxonomy" id="585057"/>
    <lineage>
        <taxon>Bacteria</taxon>
        <taxon>Pseudomonadati</taxon>
        <taxon>Pseudomonadota</taxon>
        <taxon>Gammaproteobacteria</taxon>
        <taxon>Enterobacterales</taxon>
        <taxon>Enterobacteriaceae</taxon>
        <taxon>Escherichia</taxon>
    </lineage>
</organism>
<reference key="1">
    <citation type="journal article" date="2009" name="PLoS Genet.">
        <title>Organised genome dynamics in the Escherichia coli species results in highly diverse adaptive paths.</title>
        <authorList>
            <person name="Touchon M."/>
            <person name="Hoede C."/>
            <person name="Tenaillon O."/>
            <person name="Barbe V."/>
            <person name="Baeriswyl S."/>
            <person name="Bidet P."/>
            <person name="Bingen E."/>
            <person name="Bonacorsi S."/>
            <person name="Bouchier C."/>
            <person name="Bouvet O."/>
            <person name="Calteau A."/>
            <person name="Chiapello H."/>
            <person name="Clermont O."/>
            <person name="Cruveiller S."/>
            <person name="Danchin A."/>
            <person name="Diard M."/>
            <person name="Dossat C."/>
            <person name="Karoui M.E."/>
            <person name="Frapy E."/>
            <person name="Garry L."/>
            <person name="Ghigo J.M."/>
            <person name="Gilles A.M."/>
            <person name="Johnson J."/>
            <person name="Le Bouguenec C."/>
            <person name="Lescat M."/>
            <person name="Mangenot S."/>
            <person name="Martinez-Jehanne V."/>
            <person name="Matic I."/>
            <person name="Nassif X."/>
            <person name="Oztas S."/>
            <person name="Petit M.A."/>
            <person name="Pichon C."/>
            <person name="Rouy Z."/>
            <person name="Ruf C.S."/>
            <person name="Schneider D."/>
            <person name="Tourret J."/>
            <person name="Vacherie B."/>
            <person name="Vallenet D."/>
            <person name="Medigue C."/>
            <person name="Rocha E.P.C."/>
            <person name="Denamur E."/>
        </authorList>
    </citation>
    <scope>NUCLEOTIDE SEQUENCE [LARGE SCALE GENOMIC DNA]</scope>
    <source>
        <strain>IAI39 / ExPEC</strain>
    </source>
</reference>
<keyword id="KW-0030">Aminoacyl-tRNA synthetase</keyword>
<keyword id="KW-0067">ATP-binding</keyword>
<keyword id="KW-0963">Cytoplasm</keyword>
<keyword id="KW-0436">Ligase</keyword>
<keyword id="KW-0547">Nucleotide-binding</keyword>
<keyword id="KW-0648">Protein biosynthesis</keyword>
<sequence length="424" mass="47029">MAKNIQAIRGMNDYLPGETAIWQRIEGTLKNVLGSYGYSEIRLPIVEQTPLFKRAIGEVTDVVEKEMYTFEDRNGDSLTLRPEGTAGCVRAGIEHGLLYNQEQRLWYIGPMFRHERPQKGRYRQFHQLGCEVFGLQGPDIDAELIMLTARWWRALGISEHVTLELNSIGSLEARANYRDALVAFLEQHKEKLDEDCKRRMYTNPLRVLDSKNPEVQALLNDAPALGDYLDEESREHFAGLCKLLESAGIAYTVNQRLVRGLDYYNRTVFEWVTNSLGSQGTVCAGGRYDGLVEQLGGRATPAVGFAMGLERLVLLVQAVNPEFKADPVVDIYLVASGADTQSAAMALAERLRDELPGVKLMTNHGGGNFKKQFARADKWGARVAVVLGESEVANGTAVVKDLRSGEQTAVAQDSVAAHLRTLLG</sequence>
<gene>
    <name evidence="1" type="primary">hisS</name>
    <name type="ordered locus">ECIAI39_2715</name>
</gene>
<protein>
    <recommendedName>
        <fullName evidence="1">Histidine--tRNA ligase</fullName>
        <ecNumber evidence="1">6.1.1.21</ecNumber>
    </recommendedName>
    <alternativeName>
        <fullName evidence="1">Histidyl-tRNA synthetase</fullName>
        <shortName evidence="1">HisRS</shortName>
    </alternativeName>
</protein>
<accession>B7NRG4</accession>
<feature type="chain" id="PRO_1000199134" description="Histidine--tRNA ligase">
    <location>
        <begin position="1"/>
        <end position="424"/>
    </location>
</feature>